<dbReference type="EC" id="3.5.2.17"/>
<dbReference type="EMBL" id="AL591985">
    <property type="protein sequence ID" value="CAC49566.1"/>
    <property type="status" value="ALT_INIT"/>
    <property type="molecule type" value="Genomic_DNA"/>
</dbReference>
<dbReference type="PIR" id="F95987">
    <property type="entry name" value="F95987"/>
</dbReference>
<dbReference type="RefSeq" id="NP_437706.1">
    <property type="nucleotide sequence ID" value="NC_003078.1"/>
</dbReference>
<dbReference type="SMR" id="Q92UG5"/>
<dbReference type="EnsemblBacteria" id="CAC49566">
    <property type="protein sequence ID" value="CAC49566"/>
    <property type="gene ID" value="SM_b20872"/>
</dbReference>
<dbReference type="KEGG" id="sme:SM_b20872"/>
<dbReference type="PATRIC" id="fig|266834.11.peg.6092"/>
<dbReference type="eggNOG" id="COG2351">
    <property type="taxonomic scope" value="Bacteria"/>
</dbReference>
<dbReference type="HOGENOM" id="CLU_115536_1_1_5"/>
<dbReference type="OrthoDB" id="9792386at2"/>
<dbReference type="Proteomes" id="UP000001976">
    <property type="component" value="Plasmid pSymB"/>
</dbReference>
<dbReference type="GO" id="GO:0033971">
    <property type="term" value="F:hydroxyisourate hydrolase activity"/>
    <property type="evidence" value="ECO:0007669"/>
    <property type="project" value="UniProtKB-EC"/>
</dbReference>
<dbReference type="GO" id="GO:0006144">
    <property type="term" value="P:purine nucleobase metabolic process"/>
    <property type="evidence" value="ECO:0007669"/>
    <property type="project" value="UniProtKB-KW"/>
</dbReference>
<dbReference type="CDD" id="cd05822">
    <property type="entry name" value="TLP_HIUase"/>
    <property type="match status" value="1"/>
</dbReference>
<dbReference type="FunFam" id="2.60.40.180:FF:000005">
    <property type="entry name" value="5-hydroxyisourate hydrolase"/>
    <property type="match status" value="1"/>
</dbReference>
<dbReference type="Gene3D" id="2.60.40.180">
    <property type="entry name" value="Transthyretin/hydroxyisourate hydrolase domain"/>
    <property type="match status" value="1"/>
</dbReference>
<dbReference type="InterPro" id="IPR014306">
    <property type="entry name" value="Hydroxyisourate_hydrolase"/>
</dbReference>
<dbReference type="InterPro" id="IPR023418">
    <property type="entry name" value="Thyroxine_BS"/>
</dbReference>
<dbReference type="InterPro" id="IPR023416">
    <property type="entry name" value="Transthyretin/HIU_hydrolase_d"/>
</dbReference>
<dbReference type="InterPro" id="IPR036817">
    <property type="entry name" value="Transthyretin/HIU_hydrolase_sf"/>
</dbReference>
<dbReference type="InterPro" id="IPR023419">
    <property type="entry name" value="Transthyretin_CS"/>
</dbReference>
<dbReference type="NCBIfam" id="TIGR02962">
    <property type="entry name" value="hdxy_isourate"/>
    <property type="match status" value="1"/>
</dbReference>
<dbReference type="PANTHER" id="PTHR10395:SF7">
    <property type="entry name" value="5-HYDROXYISOURATE HYDROLASE"/>
    <property type="match status" value="1"/>
</dbReference>
<dbReference type="PANTHER" id="PTHR10395">
    <property type="entry name" value="URICASE AND TRANSTHYRETIN-RELATED"/>
    <property type="match status" value="1"/>
</dbReference>
<dbReference type="Pfam" id="PF00576">
    <property type="entry name" value="Transthyretin"/>
    <property type="match status" value="1"/>
</dbReference>
<dbReference type="SUPFAM" id="SSF49472">
    <property type="entry name" value="Transthyretin (synonym: prealbumin)"/>
    <property type="match status" value="1"/>
</dbReference>
<dbReference type="PROSITE" id="PS00768">
    <property type="entry name" value="TRANSTHYRETIN_1"/>
    <property type="match status" value="1"/>
</dbReference>
<dbReference type="PROSITE" id="PS00769">
    <property type="entry name" value="TRANSTHYRETIN_2"/>
    <property type="match status" value="1"/>
</dbReference>
<accession>Q92UG5</accession>
<gene>
    <name type="ordered locus">RB1166</name>
    <name type="ORF">SMb20872</name>
</gene>
<comment type="function">
    <text evidence="1">Catalyzes the hydrolysis of 5-hydroxyisourate (HIU) to 2-oxo-4-hydroxy-4-carboxy-5-ureidoimidazoline (OHCU).</text>
</comment>
<comment type="catalytic activity">
    <reaction>
        <text>5-hydroxyisourate + H2O = 5-hydroxy-2-oxo-4-ureido-2,5-dihydro-1H-imidazole-5-carboxylate + H(+)</text>
        <dbReference type="Rhea" id="RHEA:23736"/>
        <dbReference type="ChEBI" id="CHEBI:15377"/>
        <dbReference type="ChEBI" id="CHEBI:15378"/>
        <dbReference type="ChEBI" id="CHEBI:18072"/>
        <dbReference type="ChEBI" id="CHEBI:58639"/>
        <dbReference type="EC" id="3.5.2.17"/>
    </reaction>
</comment>
<comment type="subunit">
    <text evidence="1">Homotetramer.</text>
</comment>
<comment type="miscellaneous">
    <text>HIU hydrolysis also occurs spontaneously, but more slowly.</text>
</comment>
<comment type="similarity">
    <text evidence="2">Belongs to the transthyretin family. 5-hydroxyisourate hydrolase subfamily.</text>
</comment>
<comment type="sequence caution" evidence="2">
    <conflict type="erroneous initiation">
        <sequence resource="EMBL-CDS" id="CAC49566"/>
    </conflict>
</comment>
<feature type="chain" id="PRO_0000050617" description="5-hydroxyisourate hydrolase 2">
    <location>
        <begin position="1"/>
        <end position="120"/>
    </location>
</feature>
<feature type="binding site" evidence="1">
    <location>
        <position position="10"/>
    </location>
    <ligand>
        <name>substrate</name>
    </ligand>
</feature>
<feature type="binding site" evidence="1">
    <location>
        <position position="48"/>
    </location>
    <ligand>
        <name>substrate</name>
    </ligand>
</feature>
<feature type="binding site" evidence="1">
    <location>
        <position position="117"/>
    </location>
    <ligand>
        <name>substrate</name>
    </ligand>
</feature>
<name>HIUH2_RHIME</name>
<reference key="1">
    <citation type="journal article" date="2001" name="Proc. Natl. Acad. Sci. U.S.A.">
        <title>The complete sequence of the 1,683-kb pSymB megaplasmid from the N2-fixing endosymbiont Sinorhizobium meliloti.</title>
        <authorList>
            <person name="Finan T.M."/>
            <person name="Weidner S."/>
            <person name="Wong K."/>
            <person name="Buhrmester J."/>
            <person name="Chain P."/>
            <person name="Vorhoelter F.J."/>
            <person name="Hernandez-Lucas I."/>
            <person name="Becker A."/>
            <person name="Cowie A."/>
            <person name="Gouzy J."/>
            <person name="Golding B."/>
            <person name="Puehler A."/>
        </authorList>
    </citation>
    <scope>NUCLEOTIDE SEQUENCE [LARGE SCALE GENOMIC DNA]</scope>
    <source>
        <strain>1021</strain>
    </source>
</reference>
<reference key="2">
    <citation type="journal article" date="2001" name="Science">
        <title>The composite genome of the legume symbiont Sinorhizobium meliloti.</title>
        <authorList>
            <person name="Galibert F."/>
            <person name="Finan T.M."/>
            <person name="Long S.R."/>
            <person name="Puehler A."/>
            <person name="Abola P."/>
            <person name="Ampe F."/>
            <person name="Barloy-Hubler F."/>
            <person name="Barnett M.J."/>
            <person name="Becker A."/>
            <person name="Boistard P."/>
            <person name="Bothe G."/>
            <person name="Boutry M."/>
            <person name="Bowser L."/>
            <person name="Buhrmester J."/>
            <person name="Cadieu E."/>
            <person name="Capela D."/>
            <person name="Chain P."/>
            <person name="Cowie A."/>
            <person name="Davis R.W."/>
            <person name="Dreano S."/>
            <person name="Federspiel N.A."/>
            <person name="Fisher R.F."/>
            <person name="Gloux S."/>
            <person name="Godrie T."/>
            <person name="Goffeau A."/>
            <person name="Golding B."/>
            <person name="Gouzy J."/>
            <person name="Gurjal M."/>
            <person name="Hernandez-Lucas I."/>
            <person name="Hong A."/>
            <person name="Huizar L."/>
            <person name="Hyman R.W."/>
            <person name="Jones T."/>
            <person name="Kahn D."/>
            <person name="Kahn M.L."/>
            <person name="Kalman S."/>
            <person name="Keating D.H."/>
            <person name="Kiss E."/>
            <person name="Komp C."/>
            <person name="Lelaure V."/>
            <person name="Masuy D."/>
            <person name="Palm C."/>
            <person name="Peck M.C."/>
            <person name="Pohl T.M."/>
            <person name="Portetelle D."/>
            <person name="Purnelle B."/>
            <person name="Ramsperger U."/>
            <person name="Surzycki R."/>
            <person name="Thebault P."/>
            <person name="Vandenbol M."/>
            <person name="Vorhoelter F.J."/>
            <person name="Weidner S."/>
            <person name="Wells D.H."/>
            <person name="Wong K."/>
            <person name="Yeh K.-C."/>
            <person name="Batut J."/>
        </authorList>
    </citation>
    <scope>NUCLEOTIDE SEQUENCE [LARGE SCALE GENOMIC DNA]</scope>
    <source>
        <strain>1021</strain>
    </source>
</reference>
<organism>
    <name type="scientific">Rhizobium meliloti (strain 1021)</name>
    <name type="common">Ensifer meliloti</name>
    <name type="synonym">Sinorhizobium meliloti</name>
    <dbReference type="NCBI Taxonomy" id="266834"/>
    <lineage>
        <taxon>Bacteria</taxon>
        <taxon>Pseudomonadati</taxon>
        <taxon>Pseudomonadota</taxon>
        <taxon>Alphaproteobacteria</taxon>
        <taxon>Hyphomicrobiales</taxon>
        <taxon>Rhizobiaceae</taxon>
        <taxon>Sinorhizobium/Ensifer group</taxon>
        <taxon>Sinorhizobium</taxon>
    </lineage>
</organism>
<evidence type="ECO:0000250" key="1"/>
<evidence type="ECO:0000305" key="2"/>
<sequence>MSKSGRLTTHVLDTALGRPAHGLKIDLYRLEGDARHLIRTVHTNSDGRVDGPLMEGAGFATGTYELVFHAGDYFRSAGVKLPDPAFLELVPLRFGIADADSHYHVPLLLSPYGYSTYRGS</sequence>
<keyword id="KW-0378">Hydrolase</keyword>
<keyword id="KW-0614">Plasmid</keyword>
<keyword id="KW-0659">Purine metabolism</keyword>
<keyword id="KW-1185">Reference proteome</keyword>
<proteinExistence type="inferred from homology"/>
<protein>
    <recommendedName>
        <fullName>5-hydroxyisourate hydrolase 2</fullName>
        <shortName>HIU hydrolase 2</shortName>
        <shortName>HIUHase 2</shortName>
        <ecNumber>3.5.2.17</ecNumber>
    </recommendedName>
</protein>
<geneLocation type="plasmid">
    <name>pSymB</name>
    <name>megaplasmid 2</name>
</geneLocation>